<evidence type="ECO:0000255" key="1">
    <source>
        <dbReference type="HAMAP-Rule" id="MF_00356"/>
    </source>
</evidence>
<accession>Q9KA72</accession>
<organism>
    <name type="scientific">Halalkalibacterium halodurans (strain ATCC BAA-125 / DSM 18197 / FERM 7344 / JCM 9153 / C-125)</name>
    <name type="common">Bacillus halodurans</name>
    <dbReference type="NCBI Taxonomy" id="272558"/>
    <lineage>
        <taxon>Bacteria</taxon>
        <taxon>Bacillati</taxon>
        <taxon>Bacillota</taxon>
        <taxon>Bacilli</taxon>
        <taxon>Bacillales</taxon>
        <taxon>Bacillaceae</taxon>
        <taxon>Halalkalibacterium (ex Joshi et al. 2022)</taxon>
    </lineage>
</organism>
<sequence length="1433" mass="162126">MNEEQRVRQERFKLLMEQLLIPEDVTANHLKDGKIEKLTIKKDERRWHFQLSIPTVLPASIYELLADRLVQTFSHIAKVSFQIQYGQPDLSEQVWQSYWPLIVAKLTNISQPLKEMLEKQTPRFDGKRLVIQVGNETEAIALKRKLTEPLQQAVQSFGFPAVQLDAEVKESKQAFEKFVEQRKQEDHSKVVEAILEKKKLEQQVEKKMKEEKLTIGYPIKDEPVPLETIVEEERRITVQGYIFAAETKELRSGRTLLTFKITDYTDSILVKMFSRDKEDIPLLQAVKKGMWVKVRGGVQNDTFVRDLVMIANDVNEVSGKETKDEAPDDEKRVELHLHTAMSQMDGISSAGAYVTQASKWGHKAIAITDHGVVQAFPEAYGASQKHGIKVIYGVEANLVDDGVPIAYNEAHIPLLDSEFVVFDVETTGLSAVYNKIIELAAVKVKNGEIIDRFERFADPHEPLTNTIIELTGITDDMLKGQPEVEQVLNEFHAFIGDAVLVAHNASFDMGFLNTGFQKMGLGEAKNPVIDTLELGRFLYPTLKNHRLNTLCKKFDIELVSHHRAIYDAEATGHLLWRMVKDATERDILYHDQLNDNMGEGNFHRQRPSHCILLAQTQEGLKNLYKLVSMAHVEYFYRTPRIPRSQLQKHREGILVGSGCDKGEVFEGMMQKTPQEVEEIAKFYDYIEVQPLANYEHLIEKELVKSREALQEIVANIVKLGEQLGKPVVATGNAHYLKEEDYIYRKILIASQGGANPLNKQTLPQVHFRTTSEMLEAFAFLGEEKAKEIVVTNTNHIADQIEEIHPIPDKLYTPKIEGADEEIRQMSYNRARKIYGDPLPEIVEARLEKELKSIIGHGFAVIYLISHKLVKKSLDDGYLVGSRGSVGSSFVATMTEITEVNPLPPHYVCPNCHHSHFFNDGSVGSGYDLPDENCPKCGTPYVKDGQDIPFETFLGFKGDKVPDIDLNFSGEYQPRAHNYTKELFGESYVYRAGTIGTVAEKTAYGYVKGYQSDHDLHFRGAEIDRLVTGCTGVKRTTGQHPGGIIVVPDYMDIHDFCPIQFPADDRGAEWKTTHFDFHSIHDNLLKLDILGHDDPTVIRMLQDLSGIDPKTIPTDDPEVMKIFSGPDVLGVTEEQILCKTGTLGIPEFGTRFVRQMLEETKPSTFSELVQISGLSHGTDVWLNNANELIYNGTCELKDVIGCRDDIMVYLIYKGLEPSLAFKIMEFVRKGKGLQPEWIEEMKKHDVPDWYIGSCLKIKYMFPKAHAAAYVLMAVRIAYFKVHYPILYYASYFTVRADDFDLDTMVKGSAAIRAKIEEINGKGLDASPKEKSLLTVLELALEMVERGFSFQKVDLYRSEATEFLVEGNTLIPPFNALTGVGTNAAINIVKARDEREFLSKEDLQQRSKITKTVLENLDAHGCLEGLPESNQLSLF</sequence>
<gene>
    <name evidence="1" type="primary">polC</name>
    <name type="ordered locus">BH2418</name>
</gene>
<reference key="1">
    <citation type="journal article" date="2000" name="Nucleic Acids Res.">
        <title>Complete genome sequence of the alkaliphilic bacterium Bacillus halodurans and genomic sequence comparison with Bacillus subtilis.</title>
        <authorList>
            <person name="Takami H."/>
            <person name="Nakasone K."/>
            <person name="Takaki Y."/>
            <person name="Maeno G."/>
            <person name="Sasaki R."/>
            <person name="Masui N."/>
            <person name="Fuji F."/>
            <person name="Hirama C."/>
            <person name="Nakamura Y."/>
            <person name="Ogasawara N."/>
            <person name="Kuhara S."/>
            <person name="Horikoshi K."/>
        </authorList>
    </citation>
    <scope>NUCLEOTIDE SEQUENCE [LARGE SCALE GENOMIC DNA]</scope>
    <source>
        <strain>ATCC BAA-125 / DSM 18197 / FERM 7344 / JCM 9153 / C-125</strain>
    </source>
</reference>
<protein>
    <recommendedName>
        <fullName evidence="1">DNA polymerase III PolC-type</fullName>
        <shortName evidence="1">PolIII</shortName>
        <ecNumber evidence="1">2.7.7.7</ecNumber>
    </recommendedName>
</protein>
<feature type="chain" id="PRO_0000204574" description="DNA polymerase III PolC-type">
    <location>
        <begin position="1"/>
        <end position="1433"/>
    </location>
</feature>
<feature type="domain" description="Exonuclease">
    <location>
        <begin position="419"/>
        <end position="575"/>
    </location>
</feature>
<dbReference type="EC" id="2.7.7.7" evidence="1"/>
<dbReference type="EMBL" id="BA000004">
    <property type="protein sequence ID" value="BAB06137.1"/>
    <property type="molecule type" value="Genomic_DNA"/>
</dbReference>
<dbReference type="PIR" id="B83952">
    <property type="entry name" value="B83952"/>
</dbReference>
<dbReference type="RefSeq" id="WP_010898571.1">
    <property type="nucleotide sequence ID" value="NC_002570.2"/>
</dbReference>
<dbReference type="SMR" id="Q9KA72"/>
<dbReference type="STRING" id="272558.gene:10728316"/>
<dbReference type="KEGG" id="bha:BH2418"/>
<dbReference type="eggNOG" id="COG2176">
    <property type="taxonomic scope" value="Bacteria"/>
</dbReference>
<dbReference type="HOGENOM" id="CLU_003297_2_0_9"/>
<dbReference type="OrthoDB" id="9804290at2"/>
<dbReference type="Proteomes" id="UP000001258">
    <property type="component" value="Chromosome"/>
</dbReference>
<dbReference type="GO" id="GO:0005737">
    <property type="term" value="C:cytoplasm"/>
    <property type="evidence" value="ECO:0007669"/>
    <property type="project" value="UniProtKB-SubCell"/>
</dbReference>
<dbReference type="GO" id="GO:0008408">
    <property type="term" value="F:3'-5' exonuclease activity"/>
    <property type="evidence" value="ECO:0007669"/>
    <property type="project" value="UniProtKB-UniRule"/>
</dbReference>
<dbReference type="GO" id="GO:0003677">
    <property type="term" value="F:DNA binding"/>
    <property type="evidence" value="ECO:0007669"/>
    <property type="project" value="UniProtKB-UniRule"/>
</dbReference>
<dbReference type="GO" id="GO:0003887">
    <property type="term" value="F:DNA-directed DNA polymerase activity"/>
    <property type="evidence" value="ECO:0007669"/>
    <property type="project" value="UniProtKB-UniRule"/>
</dbReference>
<dbReference type="GO" id="GO:0006261">
    <property type="term" value="P:DNA-templated DNA replication"/>
    <property type="evidence" value="ECO:0007669"/>
    <property type="project" value="UniProtKB-UniRule"/>
</dbReference>
<dbReference type="CDD" id="cd06127">
    <property type="entry name" value="DEDDh"/>
    <property type="match status" value="1"/>
</dbReference>
<dbReference type="CDD" id="cd07435">
    <property type="entry name" value="PHP_PolIIIA_POLC"/>
    <property type="match status" value="1"/>
</dbReference>
<dbReference type="CDD" id="cd04484">
    <property type="entry name" value="polC_OBF"/>
    <property type="match status" value="1"/>
</dbReference>
<dbReference type="FunFam" id="3.30.420.10:FF:000045">
    <property type="entry name" value="3'-5' exonuclease DinG"/>
    <property type="match status" value="1"/>
</dbReference>
<dbReference type="Gene3D" id="1.10.150.870">
    <property type="match status" value="1"/>
</dbReference>
<dbReference type="Gene3D" id="3.30.1900.20">
    <property type="match status" value="2"/>
</dbReference>
<dbReference type="Gene3D" id="3.20.20.140">
    <property type="entry name" value="Metal-dependent hydrolases"/>
    <property type="match status" value="1"/>
</dbReference>
<dbReference type="Gene3D" id="2.40.50.140">
    <property type="entry name" value="Nucleic acid-binding proteins"/>
    <property type="match status" value="1"/>
</dbReference>
<dbReference type="Gene3D" id="1.10.150.700">
    <property type="entry name" value="PolC, middle finger domain"/>
    <property type="match status" value="2"/>
</dbReference>
<dbReference type="Gene3D" id="3.30.420.10">
    <property type="entry name" value="Ribonuclease H-like superfamily/Ribonuclease H"/>
    <property type="match status" value="1"/>
</dbReference>
<dbReference type="HAMAP" id="MF_00356">
    <property type="entry name" value="DNApol_PolC"/>
    <property type="match status" value="1"/>
</dbReference>
<dbReference type="InterPro" id="IPR011708">
    <property type="entry name" value="DNA_pol3_alpha_NTPase_dom"/>
</dbReference>
<dbReference type="InterPro" id="IPR040982">
    <property type="entry name" value="DNA_pol3_finger"/>
</dbReference>
<dbReference type="InterPro" id="IPR024754">
    <property type="entry name" value="DNA_PolC-like_N_II"/>
</dbReference>
<dbReference type="InterPro" id="IPR028112">
    <property type="entry name" value="DNA_PolC-type_N_I"/>
</dbReference>
<dbReference type="InterPro" id="IPR004805">
    <property type="entry name" value="DnaE2/DnaE/PolC"/>
</dbReference>
<dbReference type="InterPro" id="IPR029460">
    <property type="entry name" value="DNAPol_HHH"/>
</dbReference>
<dbReference type="InterPro" id="IPR006054">
    <property type="entry name" value="DnaQ"/>
</dbReference>
<dbReference type="InterPro" id="IPR013520">
    <property type="entry name" value="Exonuclease_RNaseT/DNA_pol3"/>
</dbReference>
<dbReference type="InterPro" id="IPR012340">
    <property type="entry name" value="NA-bd_OB-fold"/>
</dbReference>
<dbReference type="InterPro" id="IPR004365">
    <property type="entry name" value="NA-bd_OB_tRNA"/>
</dbReference>
<dbReference type="InterPro" id="IPR004013">
    <property type="entry name" value="PHP_dom"/>
</dbReference>
<dbReference type="InterPro" id="IPR003141">
    <property type="entry name" value="Pol/His_phosphatase_N"/>
</dbReference>
<dbReference type="InterPro" id="IPR006308">
    <property type="entry name" value="Pol_III_a_PolC-type_gram_pos"/>
</dbReference>
<dbReference type="InterPro" id="IPR044923">
    <property type="entry name" value="PolC_middle_finger_sf"/>
</dbReference>
<dbReference type="InterPro" id="IPR012337">
    <property type="entry name" value="RNaseH-like_sf"/>
</dbReference>
<dbReference type="InterPro" id="IPR036397">
    <property type="entry name" value="RNaseH_sf"/>
</dbReference>
<dbReference type="NCBIfam" id="TIGR00573">
    <property type="entry name" value="dnaq"/>
    <property type="match status" value="1"/>
</dbReference>
<dbReference type="NCBIfam" id="TIGR01405">
    <property type="entry name" value="polC_Gram_pos"/>
    <property type="match status" value="1"/>
</dbReference>
<dbReference type="NCBIfam" id="NF001688">
    <property type="entry name" value="PRK00448.1"/>
    <property type="match status" value="1"/>
</dbReference>
<dbReference type="PANTHER" id="PTHR32294:SF5">
    <property type="entry name" value="DNA POLYMERASE III POLC-TYPE"/>
    <property type="match status" value="1"/>
</dbReference>
<dbReference type="PANTHER" id="PTHR32294">
    <property type="entry name" value="DNA POLYMERASE III SUBUNIT ALPHA"/>
    <property type="match status" value="1"/>
</dbReference>
<dbReference type="Pfam" id="PF14480">
    <property type="entry name" value="DNA_pol3_a_NI"/>
    <property type="match status" value="1"/>
</dbReference>
<dbReference type="Pfam" id="PF11490">
    <property type="entry name" value="DNA_pol3_a_NII"/>
    <property type="match status" value="1"/>
</dbReference>
<dbReference type="Pfam" id="PF07733">
    <property type="entry name" value="DNA_pol3_alpha"/>
    <property type="match status" value="1"/>
</dbReference>
<dbReference type="Pfam" id="PF17657">
    <property type="entry name" value="DNA_pol3_finger"/>
    <property type="match status" value="1"/>
</dbReference>
<dbReference type="Pfam" id="PF14579">
    <property type="entry name" value="HHH_6"/>
    <property type="match status" value="1"/>
</dbReference>
<dbReference type="Pfam" id="PF02811">
    <property type="entry name" value="PHP"/>
    <property type="match status" value="2"/>
</dbReference>
<dbReference type="Pfam" id="PF00929">
    <property type="entry name" value="RNase_T"/>
    <property type="match status" value="1"/>
</dbReference>
<dbReference type="Pfam" id="PF01336">
    <property type="entry name" value="tRNA_anti-codon"/>
    <property type="match status" value="1"/>
</dbReference>
<dbReference type="SMART" id="SM00479">
    <property type="entry name" value="EXOIII"/>
    <property type="match status" value="1"/>
</dbReference>
<dbReference type="SMART" id="SM00481">
    <property type="entry name" value="POLIIIAc"/>
    <property type="match status" value="1"/>
</dbReference>
<dbReference type="SUPFAM" id="SSF50249">
    <property type="entry name" value="Nucleic acid-binding proteins"/>
    <property type="match status" value="1"/>
</dbReference>
<dbReference type="SUPFAM" id="SSF53098">
    <property type="entry name" value="Ribonuclease H-like"/>
    <property type="match status" value="1"/>
</dbReference>
<proteinExistence type="inferred from homology"/>
<name>DPO3_HALH5</name>
<comment type="function">
    <text evidence="1">Required for replicative DNA synthesis. This DNA polymerase also exhibits 3' to 5' exonuclease activity.</text>
</comment>
<comment type="catalytic activity">
    <reaction evidence="1">
        <text>DNA(n) + a 2'-deoxyribonucleoside 5'-triphosphate = DNA(n+1) + diphosphate</text>
        <dbReference type="Rhea" id="RHEA:22508"/>
        <dbReference type="Rhea" id="RHEA-COMP:17339"/>
        <dbReference type="Rhea" id="RHEA-COMP:17340"/>
        <dbReference type="ChEBI" id="CHEBI:33019"/>
        <dbReference type="ChEBI" id="CHEBI:61560"/>
        <dbReference type="ChEBI" id="CHEBI:173112"/>
        <dbReference type="EC" id="2.7.7.7"/>
    </reaction>
</comment>
<comment type="subcellular location">
    <subcellularLocation>
        <location evidence="1">Cytoplasm</location>
    </subcellularLocation>
</comment>
<comment type="similarity">
    <text evidence="1">Belongs to the DNA polymerase type-C family. PolC subfamily.</text>
</comment>
<keyword id="KW-0963">Cytoplasm</keyword>
<keyword id="KW-0235">DNA replication</keyword>
<keyword id="KW-0239">DNA-directed DNA polymerase</keyword>
<keyword id="KW-0269">Exonuclease</keyword>
<keyword id="KW-0378">Hydrolase</keyword>
<keyword id="KW-0540">Nuclease</keyword>
<keyword id="KW-0548">Nucleotidyltransferase</keyword>
<keyword id="KW-1185">Reference proteome</keyword>
<keyword id="KW-0808">Transferase</keyword>